<evidence type="ECO:0000255" key="1">
    <source>
        <dbReference type="HAMAP-Rule" id="MF_00109"/>
    </source>
</evidence>
<name>AROK_ECO45</name>
<proteinExistence type="inferred from homology"/>
<sequence length="173" mass="19538">MAEKRNIFLVGPMGAGKSTIGRQLAQQLNMEFYDSDQEIEKRTGADVGWVFDLEGEEGFRDREEKVINELTEKQGIVLATGGGSVKSRETRNRLSARGVVVYLETTIEKQLARTQRDKKRPLLHVETPPREVLEALANERNPLYEEIADVTIRTDDQSAKVVANQIIHMLESN</sequence>
<feature type="chain" id="PRO_1000117460" description="Shikimate kinase 1">
    <location>
        <begin position="1"/>
        <end position="173"/>
    </location>
</feature>
<feature type="binding site" evidence="1">
    <location>
        <begin position="14"/>
        <end position="19"/>
    </location>
    <ligand>
        <name>ATP</name>
        <dbReference type="ChEBI" id="CHEBI:30616"/>
    </ligand>
</feature>
<feature type="binding site" evidence="1">
    <location>
        <position position="18"/>
    </location>
    <ligand>
        <name>Mg(2+)</name>
        <dbReference type="ChEBI" id="CHEBI:18420"/>
    </ligand>
</feature>
<feature type="binding site" evidence="1">
    <location>
        <position position="36"/>
    </location>
    <ligand>
        <name>substrate</name>
    </ligand>
</feature>
<feature type="binding site" evidence="1">
    <location>
        <position position="60"/>
    </location>
    <ligand>
        <name>substrate</name>
    </ligand>
</feature>
<feature type="binding site" evidence="1">
    <location>
        <position position="82"/>
    </location>
    <ligand>
        <name>substrate</name>
    </ligand>
</feature>
<feature type="binding site" evidence="1">
    <location>
        <position position="120"/>
    </location>
    <ligand>
        <name>ATP</name>
        <dbReference type="ChEBI" id="CHEBI:30616"/>
    </ligand>
</feature>
<feature type="binding site" evidence="1">
    <location>
        <position position="140"/>
    </location>
    <ligand>
        <name>substrate</name>
    </ligand>
</feature>
<feature type="binding site" evidence="1">
    <location>
        <position position="157"/>
    </location>
    <ligand>
        <name>ATP</name>
        <dbReference type="ChEBI" id="CHEBI:30616"/>
    </ligand>
</feature>
<accession>B7MD01</accession>
<keyword id="KW-0028">Amino-acid biosynthesis</keyword>
<keyword id="KW-0057">Aromatic amino acid biosynthesis</keyword>
<keyword id="KW-0067">ATP-binding</keyword>
<keyword id="KW-0963">Cytoplasm</keyword>
<keyword id="KW-0418">Kinase</keyword>
<keyword id="KW-0460">Magnesium</keyword>
<keyword id="KW-0479">Metal-binding</keyword>
<keyword id="KW-0547">Nucleotide-binding</keyword>
<keyword id="KW-1185">Reference proteome</keyword>
<keyword id="KW-0808">Transferase</keyword>
<gene>
    <name evidence="1" type="primary">aroK</name>
    <name type="ordered locus">ECS88_3775</name>
</gene>
<comment type="function">
    <text evidence="1">Catalyzes the specific phosphorylation of the 3-hydroxyl group of shikimic acid using ATP as a cosubstrate.</text>
</comment>
<comment type="catalytic activity">
    <reaction evidence="1">
        <text>shikimate + ATP = 3-phosphoshikimate + ADP + H(+)</text>
        <dbReference type="Rhea" id="RHEA:13121"/>
        <dbReference type="ChEBI" id="CHEBI:15378"/>
        <dbReference type="ChEBI" id="CHEBI:30616"/>
        <dbReference type="ChEBI" id="CHEBI:36208"/>
        <dbReference type="ChEBI" id="CHEBI:145989"/>
        <dbReference type="ChEBI" id="CHEBI:456216"/>
        <dbReference type="EC" id="2.7.1.71"/>
    </reaction>
</comment>
<comment type="cofactor">
    <cofactor evidence="1">
        <name>Mg(2+)</name>
        <dbReference type="ChEBI" id="CHEBI:18420"/>
    </cofactor>
    <text evidence="1">Binds 1 Mg(2+) ion per subunit.</text>
</comment>
<comment type="pathway">
    <text evidence="1">Metabolic intermediate biosynthesis; chorismate biosynthesis; chorismate from D-erythrose 4-phosphate and phosphoenolpyruvate: step 5/7.</text>
</comment>
<comment type="subunit">
    <text evidence="1">Monomer.</text>
</comment>
<comment type="subcellular location">
    <subcellularLocation>
        <location evidence="1">Cytoplasm</location>
    </subcellularLocation>
</comment>
<comment type="similarity">
    <text evidence="1">Belongs to the shikimate kinase family.</text>
</comment>
<protein>
    <recommendedName>
        <fullName evidence="1">Shikimate kinase 1</fullName>
        <shortName evidence="1">SK 1</shortName>
        <ecNumber evidence="1">2.7.1.71</ecNumber>
    </recommendedName>
</protein>
<organism>
    <name type="scientific">Escherichia coli O45:K1 (strain S88 / ExPEC)</name>
    <dbReference type="NCBI Taxonomy" id="585035"/>
    <lineage>
        <taxon>Bacteria</taxon>
        <taxon>Pseudomonadati</taxon>
        <taxon>Pseudomonadota</taxon>
        <taxon>Gammaproteobacteria</taxon>
        <taxon>Enterobacterales</taxon>
        <taxon>Enterobacteriaceae</taxon>
        <taxon>Escherichia</taxon>
    </lineage>
</organism>
<dbReference type="EC" id="2.7.1.71" evidence="1"/>
<dbReference type="EMBL" id="CU928161">
    <property type="protein sequence ID" value="CAR04990.1"/>
    <property type="molecule type" value="Genomic_DNA"/>
</dbReference>
<dbReference type="RefSeq" id="WP_000818618.1">
    <property type="nucleotide sequence ID" value="NC_011742.1"/>
</dbReference>
<dbReference type="SMR" id="B7MD01"/>
<dbReference type="GeneID" id="93778608"/>
<dbReference type="KEGG" id="ecz:ECS88_3775"/>
<dbReference type="HOGENOM" id="CLU_057607_2_2_6"/>
<dbReference type="UniPathway" id="UPA00053">
    <property type="reaction ID" value="UER00088"/>
</dbReference>
<dbReference type="Proteomes" id="UP000000747">
    <property type="component" value="Chromosome"/>
</dbReference>
<dbReference type="GO" id="GO:0005829">
    <property type="term" value="C:cytosol"/>
    <property type="evidence" value="ECO:0007669"/>
    <property type="project" value="TreeGrafter"/>
</dbReference>
<dbReference type="GO" id="GO:0005524">
    <property type="term" value="F:ATP binding"/>
    <property type="evidence" value="ECO:0007669"/>
    <property type="project" value="UniProtKB-UniRule"/>
</dbReference>
<dbReference type="GO" id="GO:0000287">
    <property type="term" value="F:magnesium ion binding"/>
    <property type="evidence" value="ECO:0007669"/>
    <property type="project" value="UniProtKB-UniRule"/>
</dbReference>
<dbReference type="GO" id="GO:0004765">
    <property type="term" value="F:shikimate kinase activity"/>
    <property type="evidence" value="ECO:0007669"/>
    <property type="project" value="UniProtKB-UniRule"/>
</dbReference>
<dbReference type="GO" id="GO:0008652">
    <property type="term" value="P:amino acid biosynthetic process"/>
    <property type="evidence" value="ECO:0007669"/>
    <property type="project" value="UniProtKB-KW"/>
</dbReference>
<dbReference type="GO" id="GO:0009073">
    <property type="term" value="P:aromatic amino acid family biosynthetic process"/>
    <property type="evidence" value="ECO:0007669"/>
    <property type="project" value="UniProtKB-KW"/>
</dbReference>
<dbReference type="GO" id="GO:0009423">
    <property type="term" value="P:chorismate biosynthetic process"/>
    <property type="evidence" value="ECO:0007669"/>
    <property type="project" value="UniProtKB-UniRule"/>
</dbReference>
<dbReference type="CDD" id="cd00464">
    <property type="entry name" value="SK"/>
    <property type="match status" value="1"/>
</dbReference>
<dbReference type="FunFam" id="3.40.50.300:FF:000099">
    <property type="entry name" value="Shikimate kinase 1"/>
    <property type="match status" value="1"/>
</dbReference>
<dbReference type="Gene3D" id="3.40.50.300">
    <property type="entry name" value="P-loop containing nucleotide triphosphate hydrolases"/>
    <property type="match status" value="1"/>
</dbReference>
<dbReference type="HAMAP" id="MF_00109">
    <property type="entry name" value="Shikimate_kinase"/>
    <property type="match status" value="1"/>
</dbReference>
<dbReference type="InterPro" id="IPR027417">
    <property type="entry name" value="P-loop_NTPase"/>
</dbReference>
<dbReference type="InterPro" id="IPR031322">
    <property type="entry name" value="Shikimate/glucono_kinase"/>
</dbReference>
<dbReference type="InterPro" id="IPR000623">
    <property type="entry name" value="Shikimate_kinase/TSH1"/>
</dbReference>
<dbReference type="InterPro" id="IPR023000">
    <property type="entry name" value="Shikimate_kinase_CS"/>
</dbReference>
<dbReference type="NCBIfam" id="NF003456">
    <property type="entry name" value="PRK05057.1"/>
    <property type="match status" value="1"/>
</dbReference>
<dbReference type="PANTHER" id="PTHR21087">
    <property type="entry name" value="SHIKIMATE KINASE"/>
    <property type="match status" value="1"/>
</dbReference>
<dbReference type="PANTHER" id="PTHR21087:SF16">
    <property type="entry name" value="SHIKIMATE KINASE 1, CHLOROPLASTIC"/>
    <property type="match status" value="1"/>
</dbReference>
<dbReference type="Pfam" id="PF01202">
    <property type="entry name" value="SKI"/>
    <property type="match status" value="1"/>
</dbReference>
<dbReference type="PRINTS" id="PR01100">
    <property type="entry name" value="SHIKIMTKNASE"/>
</dbReference>
<dbReference type="SUPFAM" id="SSF52540">
    <property type="entry name" value="P-loop containing nucleoside triphosphate hydrolases"/>
    <property type="match status" value="1"/>
</dbReference>
<dbReference type="PROSITE" id="PS01128">
    <property type="entry name" value="SHIKIMATE_KINASE"/>
    <property type="match status" value="1"/>
</dbReference>
<reference key="1">
    <citation type="journal article" date="2009" name="PLoS Genet.">
        <title>Organised genome dynamics in the Escherichia coli species results in highly diverse adaptive paths.</title>
        <authorList>
            <person name="Touchon M."/>
            <person name="Hoede C."/>
            <person name="Tenaillon O."/>
            <person name="Barbe V."/>
            <person name="Baeriswyl S."/>
            <person name="Bidet P."/>
            <person name="Bingen E."/>
            <person name="Bonacorsi S."/>
            <person name="Bouchier C."/>
            <person name="Bouvet O."/>
            <person name="Calteau A."/>
            <person name="Chiapello H."/>
            <person name="Clermont O."/>
            <person name="Cruveiller S."/>
            <person name="Danchin A."/>
            <person name="Diard M."/>
            <person name="Dossat C."/>
            <person name="Karoui M.E."/>
            <person name="Frapy E."/>
            <person name="Garry L."/>
            <person name="Ghigo J.M."/>
            <person name="Gilles A.M."/>
            <person name="Johnson J."/>
            <person name="Le Bouguenec C."/>
            <person name="Lescat M."/>
            <person name="Mangenot S."/>
            <person name="Martinez-Jehanne V."/>
            <person name="Matic I."/>
            <person name="Nassif X."/>
            <person name="Oztas S."/>
            <person name="Petit M.A."/>
            <person name="Pichon C."/>
            <person name="Rouy Z."/>
            <person name="Ruf C.S."/>
            <person name="Schneider D."/>
            <person name="Tourret J."/>
            <person name="Vacherie B."/>
            <person name="Vallenet D."/>
            <person name="Medigue C."/>
            <person name="Rocha E.P.C."/>
            <person name="Denamur E."/>
        </authorList>
    </citation>
    <scope>NUCLEOTIDE SEQUENCE [LARGE SCALE GENOMIC DNA]</scope>
    <source>
        <strain>S88 / ExPEC</strain>
    </source>
</reference>